<keyword id="KW-0004">4Fe-4S</keyword>
<keyword id="KW-0963">Cytoplasm</keyword>
<keyword id="KW-1015">Disulfide bond</keyword>
<keyword id="KW-0408">Iron</keyword>
<keyword id="KW-0411">Iron-sulfur</keyword>
<keyword id="KW-0479">Metal-binding</keyword>
<keyword id="KW-0489">Methyltransferase</keyword>
<keyword id="KW-0698">rRNA processing</keyword>
<keyword id="KW-0949">S-adenosyl-L-methionine</keyword>
<keyword id="KW-0808">Transferase</keyword>
<keyword id="KW-0819">tRNA processing</keyword>
<name>RLMN_RHOP5</name>
<evidence type="ECO:0000255" key="1">
    <source>
        <dbReference type="HAMAP-Rule" id="MF_01849"/>
    </source>
</evidence>
<evidence type="ECO:0000255" key="2">
    <source>
        <dbReference type="PROSITE-ProRule" id="PRU01266"/>
    </source>
</evidence>
<protein>
    <recommendedName>
        <fullName evidence="1">Dual-specificity RNA methyltransferase RlmN</fullName>
        <ecNumber evidence="1">2.1.1.192</ecNumber>
    </recommendedName>
    <alternativeName>
        <fullName evidence="1">23S rRNA (adenine(2503)-C(2))-methyltransferase</fullName>
    </alternativeName>
    <alternativeName>
        <fullName evidence="1">23S rRNA m2A2503 methyltransferase</fullName>
    </alternativeName>
    <alternativeName>
        <fullName evidence="1">Ribosomal RNA large subunit methyltransferase N</fullName>
    </alternativeName>
    <alternativeName>
        <fullName evidence="1">tRNA (adenine(37)-C(2))-methyltransferase</fullName>
    </alternativeName>
    <alternativeName>
        <fullName evidence="1">tRNA m2A37 methyltransferase</fullName>
    </alternativeName>
</protein>
<comment type="function">
    <text evidence="1">Specifically methylates position 2 of adenine 2503 in 23S rRNA and position 2 of adenine 37 in tRNAs. m2A2503 modification seems to play a crucial role in the proofreading step occurring at the peptidyl transferase center and thus would serve to optimize ribosomal fidelity.</text>
</comment>
<comment type="catalytic activity">
    <reaction evidence="1">
        <text>adenosine(2503) in 23S rRNA + 2 reduced [2Fe-2S]-[ferredoxin] + 2 S-adenosyl-L-methionine = 2-methyladenosine(2503) in 23S rRNA + 5'-deoxyadenosine + L-methionine + 2 oxidized [2Fe-2S]-[ferredoxin] + S-adenosyl-L-homocysteine</text>
        <dbReference type="Rhea" id="RHEA:42916"/>
        <dbReference type="Rhea" id="RHEA-COMP:10000"/>
        <dbReference type="Rhea" id="RHEA-COMP:10001"/>
        <dbReference type="Rhea" id="RHEA-COMP:10152"/>
        <dbReference type="Rhea" id="RHEA-COMP:10282"/>
        <dbReference type="ChEBI" id="CHEBI:17319"/>
        <dbReference type="ChEBI" id="CHEBI:33737"/>
        <dbReference type="ChEBI" id="CHEBI:33738"/>
        <dbReference type="ChEBI" id="CHEBI:57844"/>
        <dbReference type="ChEBI" id="CHEBI:57856"/>
        <dbReference type="ChEBI" id="CHEBI:59789"/>
        <dbReference type="ChEBI" id="CHEBI:74411"/>
        <dbReference type="ChEBI" id="CHEBI:74497"/>
        <dbReference type="EC" id="2.1.1.192"/>
    </reaction>
</comment>
<comment type="catalytic activity">
    <reaction evidence="1">
        <text>adenosine(37) in tRNA + 2 reduced [2Fe-2S]-[ferredoxin] + 2 S-adenosyl-L-methionine = 2-methyladenosine(37) in tRNA + 5'-deoxyadenosine + L-methionine + 2 oxidized [2Fe-2S]-[ferredoxin] + S-adenosyl-L-homocysteine</text>
        <dbReference type="Rhea" id="RHEA:43332"/>
        <dbReference type="Rhea" id="RHEA-COMP:10000"/>
        <dbReference type="Rhea" id="RHEA-COMP:10001"/>
        <dbReference type="Rhea" id="RHEA-COMP:10162"/>
        <dbReference type="Rhea" id="RHEA-COMP:10485"/>
        <dbReference type="ChEBI" id="CHEBI:17319"/>
        <dbReference type="ChEBI" id="CHEBI:33737"/>
        <dbReference type="ChEBI" id="CHEBI:33738"/>
        <dbReference type="ChEBI" id="CHEBI:57844"/>
        <dbReference type="ChEBI" id="CHEBI:57856"/>
        <dbReference type="ChEBI" id="CHEBI:59789"/>
        <dbReference type="ChEBI" id="CHEBI:74411"/>
        <dbReference type="ChEBI" id="CHEBI:74497"/>
        <dbReference type="EC" id="2.1.1.192"/>
    </reaction>
</comment>
<comment type="cofactor">
    <cofactor evidence="1">
        <name>[4Fe-4S] cluster</name>
        <dbReference type="ChEBI" id="CHEBI:49883"/>
    </cofactor>
    <text evidence="1">Binds 1 [4Fe-4S] cluster. The cluster is coordinated with 3 cysteines and an exchangeable S-adenosyl-L-methionine.</text>
</comment>
<comment type="subcellular location">
    <subcellularLocation>
        <location evidence="1">Cytoplasm</location>
    </subcellularLocation>
</comment>
<comment type="miscellaneous">
    <text evidence="1">Reaction proceeds by a ping-pong mechanism involving intermediate methylation of a conserved cysteine residue.</text>
</comment>
<comment type="similarity">
    <text evidence="1">Belongs to the radical SAM superfamily. RlmN family.</text>
</comment>
<proteinExistence type="inferred from homology"/>
<gene>
    <name evidence="1" type="primary">rlmN</name>
    <name type="ordered locus">RPE_0038</name>
</gene>
<reference key="1">
    <citation type="submission" date="2006-09" db="EMBL/GenBank/DDBJ databases">
        <title>Complete sequence of Rhodopseudomonas palustris BisA53.</title>
        <authorList>
            <consortium name="US DOE Joint Genome Institute"/>
            <person name="Copeland A."/>
            <person name="Lucas S."/>
            <person name="Lapidus A."/>
            <person name="Barry K."/>
            <person name="Detter J.C."/>
            <person name="Glavina del Rio T."/>
            <person name="Hammon N."/>
            <person name="Israni S."/>
            <person name="Dalin E."/>
            <person name="Tice H."/>
            <person name="Pitluck S."/>
            <person name="Chain P."/>
            <person name="Malfatti S."/>
            <person name="Shin M."/>
            <person name="Vergez L."/>
            <person name="Schmutz J."/>
            <person name="Larimer F."/>
            <person name="Land M."/>
            <person name="Hauser L."/>
            <person name="Pelletier D.A."/>
            <person name="Kyrpides N."/>
            <person name="Kim E."/>
            <person name="Harwood C.S."/>
            <person name="Oda Y."/>
            <person name="Richardson P."/>
        </authorList>
    </citation>
    <scope>NUCLEOTIDE SEQUENCE [LARGE SCALE GENOMIC DNA]</scope>
    <source>
        <strain>BisA53</strain>
    </source>
</reference>
<accession>Q07VN5</accession>
<dbReference type="EC" id="2.1.1.192" evidence="1"/>
<dbReference type="EMBL" id="CP000463">
    <property type="protein sequence ID" value="ABJ03999.1"/>
    <property type="molecule type" value="Genomic_DNA"/>
</dbReference>
<dbReference type="SMR" id="Q07VN5"/>
<dbReference type="STRING" id="316055.RPE_0038"/>
<dbReference type="KEGG" id="rpe:RPE_0038"/>
<dbReference type="eggNOG" id="COG0820">
    <property type="taxonomic scope" value="Bacteria"/>
</dbReference>
<dbReference type="HOGENOM" id="CLU_029101_0_0_5"/>
<dbReference type="OrthoDB" id="9793973at2"/>
<dbReference type="GO" id="GO:0005737">
    <property type="term" value="C:cytoplasm"/>
    <property type="evidence" value="ECO:0007669"/>
    <property type="project" value="UniProtKB-SubCell"/>
</dbReference>
<dbReference type="GO" id="GO:0051539">
    <property type="term" value="F:4 iron, 4 sulfur cluster binding"/>
    <property type="evidence" value="ECO:0007669"/>
    <property type="project" value="UniProtKB-UniRule"/>
</dbReference>
<dbReference type="GO" id="GO:0046872">
    <property type="term" value="F:metal ion binding"/>
    <property type="evidence" value="ECO:0007669"/>
    <property type="project" value="UniProtKB-KW"/>
</dbReference>
<dbReference type="GO" id="GO:0070040">
    <property type="term" value="F:rRNA (adenine(2503)-C2-)-methyltransferase activity"/>
    <property type="evidence" value="ECO:0007669"/>
    <property type="project" value="UniProtKB-UniRule"/>
</dbReference>
<dbReference type="GO" id="GO:0019843">
    <property type="term" value="F:rRNA binding"/>
    <property type="evidence" value="ECO:0007669"/>
    <property type="project" value="UniProtKB-UniRule"/>
</dbReference>
<dbReference type="GO" id="GO:0002935">
    <property type="term" value="F:tRNA (adenine(37)-C2)-methyltransferase activity"/>
    <property type="evidence" value="ECO:0007669"/>
    <property type="project" value="UniProtKB-UniRule"/>
</dbReference>
<dbReference type="GO" id="GO:0000049">
    <property type="term" value="F:tRNA binding"/>
    <property type="evidence" value="ECO:0007669"/>
    <property type="project" value="UniProtKB-UniRule"/>
</dbReference>
<dbReference type="GO" id="GO:0070475">
    <property type="term" value="P:rRNA base methylation"/>
    <property type="evidence" value="ECO:0007669"/>
    <property type="project" value="UniProtKB-UniRule"/>
</dbReference>
<dbReference type="GO" id="GO:0030488">
    <property type="term" value="P:tRNA methylation"/>
    <property type="evidence" value="ECO:0007669"/>
    <property type="project" value="UniProtKB-UniRule"/>
</dbReference>
<dbReference type="CDD" id="cd01335">
    <property type="entry name" value="Radical_SAM"/>
    <property type="match status" value="1"/>
</dbReference>
<dbReference type="FunFam" id="3.20.20.70:FF:000008">
    <property type="entry name" value="Dual-specificity RNA methyltransferase RlmN"/>
    <property type="match status" value="1"/>
</dbReference>
<dbReference type="Gene3D" id="1.10.150.530">
    <property type="match status" value="1"/>
</dbReference>
<dbReference type="Gene3D" id="3.20.20.70">
    <property type="entry name" value="Aldolase class I"/>
    <property type="match status" value="1"/>
</dbReference>
<dbReference type="HAMAP" id="MF_01849">
    <property type="entry name" value="RNA_methyltr_RlmN"/>
    <property type="match status" value="1"/>
</dbReference>
<dbReference type="InterPro" id="IPR013785">
    <property type="entry name" value="Aldolase_TIM"/>
</dbReference>
<dbReference type="InterPro" id="IPR040072">
    <property type="entry name" value="Methyltransferase_A"/>
</dbReference>
<dbReference type="InterPro" id="IPR048641">
    <property type="entry name" value="RlmN_N"/>
</dbReference>
<dbReference type="InterPro" id="IPR027492">
    <property type="entry name" value="RNA_MTrfase_RlmN"/>
</dbReference>
<dbReference type="InterPro" id="IPR004383">
    <property type="entry name" value="rRNA_lsu_MTrfase_RlmN/Cfr"/>
</dbReference>
<dbReference type="InterPro" id="IPR007197">
    <property type="entry name" value="rSAM"/>
</dbReference>
<dbReference type="NCBIfam" id="TIGR00048">
    <property type="entry name" value="rRNA_mod_RlmN"/>
    <property type="match status" value="1"/>
</dbReference>
<dbReference type="PANTHER" id="PTHR30544">
    <property type="entry name" value="23S RRNA METHYLTRANSFERASE"/>
    <property type="match status" value="1"/>
</dbReference>
<dbReference type="PANTHER" id="PTHR30544:SF5">
    <property type="entry name" value="RADICAL SAM CORE DOMAIN-CONTAINING PROTEIN"/>
    <property type="match status" value="1"/>
</dbReference>
<dbReference type="Pfam" id="PF04055">
    <property type="entry name" value="Radical_SAM"/>
    <property type="match status" value="1"/>
</dbReference>
<dbReference type="Pfam" id="PF21016">
    <property type="entry name" value="RlmN_N"/>
    <property type="match status" value="1"/>
</dbReference>
<dbReference type="PIRSF" id="PIRSF006004">
    <property type="entry name" value="CHP00048"/>
    <property type="match status" value="1"/>
</dbReference>
<dbReference type="SFLD" id="SFLDF00275">
    <property type="entry name" value="adenosine_C2_methyltransferase"/>
    <property type="match status" value="1"/>
</dbReference>
<dbReference type="SFLD" id="SFLDS00029">
    <property type="entry name" value="Radical_SAM"/>
    <property type="match status" value="1"/>
</dbReference>
<dbReference type="SUPFAM" id="SSF102114">
    <property type="entry name" value="Radical SAM enzymes"/>
    <property type="match status" value="1"/>
</dbReference>
<dbReference type="PROSITE" id="PS51918">
    <property type="entry name" value="RADICAL_SAM"/>
    <property type="match status" value="1"/>
</dbReference>
<feature type="chain" id="PRO_0000350369" description="Dual-specificity RNA methyltransferase RlmN">
    <location>
        <begin position="1"/>
        <end position="403"/>
    </location>
</feature>
<feature type="domain" description="Radical SAM core" evidence="2">
    <location>
        <begin position="127"/>
        <end position="375"/>
    </location>
</feature>
<feature type="active site" description="Proton acceptor" evidence="1">
    <location>
        <position position="121"/>
    </location>
</feature>
<feature type="active site" description="S-methylcysteine intermediate" evidence="1">
    <location>
        <position position="378"/>
    </location>
</feature>
<feature type="binding site" evidence="1">
    <location>
        <position position="141"/>
    </location>
    <ligand>
        <name>[4Fe-4S] cluster</name>
        <dbReference type="ChEBI" id="CHEBI:49883"/>
        <note>4Fe-4S-S-AdoMet</note>
    </ligand>
</feature>
<feature type="binding site" evidence="1">
    <location>
        <position position="145"/>
    </location>
    <ligand>
        <name>[4Fe-4S] cluster</name>
        <dbReference type="ChEBI" id="CHEBI:49883"/>
        <note>4Fe-4S-S-AdoMet</note>
    </ligand>
</feature>
<feature type="binding site" evidence="1">
    <location>
        <position position="148"/>
    </location>
    <ligand>
        <name>[4Fe-4S] cluster</name>
        <dbReference type="ChEBI" id="CHEBI:49883"/>
        <note>4Fe-4S-S-AdoMet</note>
    </ligand>
</feature>
<feature type="binding site" evidence="1">
    <location>
        <begin position="204"/>
        <end position="205"/>
    </location>
    <ligand>
        <name>S-adenosyl-L-methionine</name>
        <dbReference type="ChEBI" id="CHEBI:59789"/>
    </ligand>
</feature>
<feature type="binding site" evidence="1">
    <location>
        <position position="236"/>
    </location>
    <ligand>
        <name>S-adenosyl-L-methionine</name>
        <dbReference type="ChEBI" id="CHEBI:59789"/>
    </ligand>
</feature>
<feature type="binding site" evidence="1">
    <location>
        <begin position="258"/>
        <end position="260"/>
    </location>
    <ligand>
        <name>S-adenosyl-L-methionine</name>
        <dbReference type="ChEBI" id="CHEBI:59789"/>
    </ligand>
</feature>
<feature type="binding site" evidence="1">
    <location>
        <position position="335"/>
    </location>
    <ligand>
        <name>S-adenosyl-L-methionine</name>
        <dbReference type="ChEBI" id="CHEBI:59789"/>
    </ligand>
</feature>
<feature type="disulfide bond" description="(transient)" evidence="1">
    <location>
        <begin position="134"/>
        <end position="378"/>
    </location>
</feature>
<sequence>MTQASAAPLEKTALESYVALAKPSLIGLSRPELMERLGGIGVAAAQRKMRAQQLWHWIYVRGATDFAQMTSISKELRAQLAEHFTVDRPEVVTEQISNDGTRKWLLRLPSGQAGERAHEVECVYIPETDRGTLCVSSQVGCTLNCSFCHTGTQKLVRNLTAGEIVGQVMVAKDRLGDWPMAVASTQDAGENNRLITNVVMMGMGEPLYNFEAVRDALLIVSDNEGIGLSRRRITLSTSGVVPNIFRTGDEIGVMLAISLHAVRDELRNELVPLNKKYPLKELLQACRDYPGASNARRITFEYVMLKGVNDSLDDAKLLVKLLKGVPAKINLIPFNPWPGSAYQCSDWDQIEKFSEYIFNAGYSSPVRTPRGRDILAACGQLKSETEKLSARERDALRAMAMTD</sequence>
<organism>
    <name type="scientific">Rhodopseudomonas palustris (strain BisA53)</name>
    <dbReference type="NCBI Taxonomy" id="316055"/>
    <lineage>
        <taxon>Bacteria</taxon>
        <taxon>Pseudomonadati</taxon>
        <taxon>Pseudomonadota</taxon>
        <taxon>Alphaproteobacteria</taxon>
        <taxon>Hyphomicrobiales</taxon>
        <taxon>Nitrobacteraceae</taxon>
        <taxon>Rhodopseudomonas</taxon>
    </lineage>
</organism>